<protein>
    <recommendedName>
        <fullName evidence="1">Methionine import ATP-binding protein MetN</fullName>
        <ecNumber evidence="1">7.4.2.11</ecNumber>
    </recommendedName>
</protein>
<proteinExistence type="inferred from homology"/>
<evidence type="ECO:0000255" key="1">
    <source>
        <dbReference type="HAMAP-Rule" id="MF_01719"/>
    </source>
</evidence>
<accession>Q9K789</accession>
<dbReference type="EC" id="7.4.2.11" evidence="1"/>
<dbReference type="EMBL" id="BA000004">
    <property type="protein sequence ID" value="BAB07200.1"/>
    <property type="molecule type" value="Genomic_DNA"/>
</dbReference>
<dbReference type="PIR" id="A84085">
    <property type="entry name" value="A84085"/>
</dbReference>
<dbReference type="RefSeq" id="WP_010899613.1">
    <property type="nucleotide sequence ID" value="NC_002570.2"/>
</dbReference>
<dbReference type="SMR" id="Q9K789"/>
<dbReference type="STRING" id="272558.gene:10729394"/>
<dbReference type="KEGG" id="bha:BH3481"/>
<dbReference type="eggNOG" id="COG1135">
    <property type="taxonomic scope" value="Bacteria"/>
</dbReference>
<dbReference type="HOGENOM" id="CLU_000604_1_3_9"/>
<dbReference type="OrthoDB" id="9802264at2"/>
<dbReference type="Proteomes" id="UP000001258">
    <property type="component" value="Chromosome"/>
</dbReference>
<dbReference type="GO" id="GO:0005886">
    <property type="term" value="C:plasma membrane"/>
    <property type="evidence" value="ECO:0007669"/>
    <property type="project" value="UniProtKB-SubCell"/>
</dbReference>
<dbReference type="GO" id="GO:0033232">
    <property type="term" value="F:ABC-type D-methionine transporter activity"/>
    <property type="evidence" value="ECO:0007669"/>
    <property type="project" value="UniProtKB-EC"/>
</dbReference>
<dbReference type="GO" id="GO:0005524">
    <property type="term" value="F:ATP binding"/>
    <property type="evidence" value="ECO:0007669"/>
    <property type="project" value="UniProtKB-KW"/>
</dbReference>
<dbReference type="GO" id="GO:0016887">
    <property type="term" value="F:ATP hydrolysis activity"/>
    <property type="evidence" value="ECO:0007669"/>
    <property type="project" value="InterPro"/>
</dbReference>
<dbReference type="CDD" id="cd03258">
    <property type="entry name" value="ABC_MetN_methionine_transporter"/>
    <property type="match status" value="1"/>
</dbReference>
<dbReference type="FunFam" id="3.40.50.300:FF:000233">
    <property type="entry name" value="Methionine import ATP-binding protein MetN"/>
    <property type="match status" value="1"/>
</dbReference>
<dbReference type="Gene3D" id="3.30.70.260">
    <property type="match status" value="1"/>
</dbReference>
<dbReference type="Gene3D" id="3.40.50.300">
    <property type="entry name" value="P-loop containing nucleotide triphosphate hydrolases"/>
    <property type="match status" value="1"/>
</dbReference>
<dbReference type="InterPro" id="IPR003593">
    <property type="entry name" value="AAA+_ATPase"/>
</dbReference>
<dbReference type="InterPro" id="IPR003439">
    <property type="entry name" value="ABC_transporter-like_ATP-bd"/>
</dbReference>
<dbReference type="InterPro" id="IPR017871">
    <property type="entry name" value="ABC_transporter-like_CS"/>
</dbReference>
<dbReference type="InterPro" id="IPR045865">
    <property type="entry name" value="ACT-like_dom_sf"/>
</dbReference>
<dbReference type="InterPro" id="IPR041701">
    <property type="entry name" value="MetN_ABC"/>
</dbReference>
<dbReference type="InterPro" id="IPR050086">
    <property type="entry name" value="MetN_ABC_transporter-like"/>
</dbReference>
<dbReference type="InterPro" id="IPR018449">
    <property type="entry name" value="NIL_domain"/>
</dbReference>
<dbReference type="InterPro" id="IPR027417">
    <property type="entry name" value="P-loop_NTPase"/>
</dbReference>
<dbReference type="PANTHER" id="PTHR43166">
    <property type="entry name" value="AMINO ACID IMPORT ATP-BINDING PROTEIN"/>
    <property type="match status" value="1"/>
</dbReference>
<dbReference type="PANTHER" id="PTHR43166:SF36">
    <property type="entry name" value="METHIONINE IMPORT ATP-BINDING PROTEIN METN 2"/>
    <property type="match status" value="1"/>
</dbReference>
<dbReference type="Pfam" id="PF00005">
    <property type="entry name" value="ABC_tran"/>
    <property type="match status" value="1"/>
</dbReference>
<dbReference type="Pfam" id="PF09383">
    <property type="entry name" value="NIL"/>
    <property type="match status" value="1"/>
</dbReference>
<dbReference type="SMART" id="SM00382">
    <property type="entry name" value="AAA"/>
    <property type="match status" value="1"/>
</dbReference>
<dbReference type="SMART" id="SM00930">
    <property type="entry name" value="NIL"/>
    <property type="match status" value="1"/>
</dbReference>
<dbReference type="SUPFAM" id="SSF55021">
    <property type="entry name" value="ACT-like"/>
    <property type="match status" value="1"/>
</dbReference>
<dbReference type="SUPFAM" id="SSF52540">
    <property type="entry name" value="P-loop containing nucleoside triphosphate hydrolases"/>
    <property type="match status" value="1"/>
</dbReference>
<dbReference type="PROSITE" id="PS00211">
    <property type="entry name" value="ABC_TRANSPORTER_1"/>
    <property type="match status" value="1"/>
</dbReference>
<dbReference type="PROSITE" id="PS50893">
    <property type="entry name" value="ABC_TRANSPORTER_2"/>
    <property type="match status" value="1"/>
</dbReference>
<dbReference type="PROSITE" id="PS51264">
    <property type="entry name" value="METN"/>
    <property type="match status" value="1"/>
</dbReference>
<name>METN_HALH5</name>
<sequence>MISLDGIRKVFKAKRGSVTAVDGVNLKINEGEIFGVIGYSGAGKSTLIRMLNMLERPTEGSVIVAGKDLSKLSDRDLRIERQKIGMIFQHFNLLWSRTVRKNIAFPLEIAGVPKKEREKRVDELINLVGLEGREEAYPSQLSGGQKQRVGIARALANNPKVLLCDEATSALDPKTTDSILDLLVDINEKLGLTIVLITHEMHVIRKICHRVAVMEAGKVVEEGPVLDVFRKPKEHITKEFVKQVTEPEETVQHLLNEVKSGRIVQLTFVGESAEKPLITNLIRTFAVDVNILQGKISKTQEGSYGTLFIHLDGPKDEIEKAITYMHEQQLELEVIAGA</sequence>
<keyword id="KW-0029">Amino-acid transport</keyword>
<keyword id="KW-0067">ATP-binding</keyword>
<keyword id="KW-1003">Cell membrane</keyword>
<keyword id="KW-0472">Membrane</keyword>
<keyword id="KW-0547">Nucleotide-binding</keyword>
<keyword id="KW-1185">Reference proteome</keyword>
<keyword id="KW-1278">Translocase</keyword>
<keyword id="KW-0813">Transport</keyword>
<feature type="chain" id="PRO_0000270244" description="Methionine import ATP-binding protein MetN">
    <location>
        <begin position="1"/>
        <end position="338"/>
    </location>
</feature>
<feature type="domain" description="ABC transporter" evidence="1">
    <location>
        <begin position="2"/>
        <end position="241"/>
    </location>
</feature>
<feature type="binding site" evidence="1">
    <location>
        <begin position="38"/>
        <end position="45"/>
    </location>
    <ligand>
        <name>ATP</name>
        <dbReference type="ChEBI" id="CHEBI:30616"/>
    </ligand>
</feature>
<reference key="1">
    <citation type="journal article" date="2000" name="Nucleic Acids Res.">
        <title>Complete genome sequence of the alkaliphilic bacterium Bacillus halodurans and genomic sequence comparison with Bacillus subtilis.</title>
        <authorList>
            <person name="Takami H."/>
            <person name="Nakasone K."/>
            <person name="Takaki Y."/>
            <person name="Maeno G."/>
            <person name="Sasaki R."/>
            <person name="Masui N."/>
            <person name="Fuji F."/>
            <person name="Hirama C."/>
            <person name="Nakamura Y."/>
            <person name="Ogasawara N."/>
            <person name="Kuhara S."/>
            <person name="Horikoshi K."/>
        </authorList>
    </citation>
    <scope>NUCLEOTIDE SEQUENCE [LARGE SCALE GENOMIC DNA]</scope>
    <source>
        <strain>ATCC BAA-125 / DSM 18197 / FERM 7344 / JCM 9153 / C-125</strain>
    </source>
</reference>
<gene>
    <name evidence="1" type="primary">metN</name>
    <name type="ordered locus">BH3481</name>
</gene>
<comment type="function">
    <text evidence="1">Part of the ABC transporter complex MetNIQ involved in methionine import. Responsible for energy coupling to the transport system.</text>
</comment>
<comment type="catalytic activity">
    <reaction evidence="1">
        <text>L-methionine(out) + ATP + H2O = L-methionine(in) + ADP + phosphate + H(+)</text>
        <dbReference type="Rhea" id="RHEA:29779"/>
        <dbReference type="ChEBI" id="CHEBI:15377"/>
        <dbReference type="ChEBI" id="CHEBI:15378"/>
        <dbReference type="ChEBI" id="CHEBI:30616"/>
        <dbReference type="ChEBI" id="CHEBI:43474"/>
        <dbReference type="ChEBI" id="CHEBI:57844"/>
        <dbReference type="ChEBI" id="CHEBI:456216"/>
        <dbReference type="EC" id="7.4.2.11"/>
    </reaction>
</comment>
<comment type="catalytic activity">
    <reaction evidence="1">
        <text>D-methionine(out) + ATP + H2O = D-methionine(in) + ADP + phosphate + H(+)</text>
        <dbReference type="Rhea" id="RHEA:29767"/>
        <dbReference type="ChEBI" id="CHEBI:15377"/>
        <dbReference type="ChEBI" id="CHEBI:15378"/>
        <dbReference type="ChEBI" id="CHEBI:30616"/>
        <dbReference type="ChEBI" id="CHEBI:43474"/>
        <dbReference type="ChEBI" id="CHEBI:57932"/>
        <dbReference type="ChEBI" id="CHEBI:456216"/>
        <dbReference type="EC" id="7.4.2.11"/>
    </reaction>
</comment>
<comment type="subunit">
    <text evidence="1">The complex is composed of two ATP-binding proteins (MetN), two transmembrane proteins (MetI) and a solute-binding protein (MetQ).</text>
</comment>
<comment type="subcellular location">
    <subcellularLocation>
        <location evidence="1">Cell membrane</location>
        <topology evidence="1">Peripheral membrane protein</topology>
    </subcellularLocation>
</comment>
<comment type="similarity">
    <text evidence="1">Belongs to the ABC transporter superfamily. Methionine importer (TC 3.A.1.24) family.</text>
</comment>
<organism>
    <name type="scientific">Halalkalibacterium halodurans (strain ATCC BAA-125 / DSM 18197 / FERM 7344 / JCM 9153 / C-125)</name>
    <name type="common">Bacillus halodurans</name>
    <dbReference type="NCBI Taxonomy" id="272558"/>
    <lineage>
        <taxon>Bacteria</taxon>
        <taxon>Bacillati</taxon>
        <taxon>Bacillota</taxon>
        <taxon>Bacilli</taxon>
        <taxon>Bacillales</taxon>
        <taxon>Bacillaceae</taxon>
        <taxon>Halalkalibacterium (ex Joshi et al. 2022)</taxon>
    </lineage>
</organism>